<organism>
    <name type="scientific">Burkholderia multivorans (strain ATCC 17616 / 249)</name>
    <dbReference type="NCBI Taxonomy" id="395019"/>
    <lineage>
        <taxon>Bacteria</taxon>
        <taxon>Pseudomonadati</taxon>
        <taxon>Pseudomonadota</taxon>
        <taxon>Betaproteobacteria</taxon>
        <taxon>Burkholderiales</taxon>
        <taxon>Burkholderiaceae</taxon>
        <taxon>Burkholderia</taxon>
        <taxon>Burkholderia cepacia complex</taxon>
    </lineage>
</organism>
<dbReference type="EC" id="1.1.1.435" evidence="2"/>
<dbReference type="EMBL" id="AP009386">
    <property type="protein sequence ID" value="BAG46765.1"/>
    <property type="molecule type" value="Genomic_DNA"/>
</dbReference>
<dbReference type="RefSeq" id="WP_012216495.1">
    <property type="nucleotide sequence ID" value="NC_010086.1"/>
</dbReference>
<dbReference type="PDB" id="4GKB">
    <property type="method" value="X-ray"/>
    <property type="resolution" value="1.50 A"/>
    <property type="chains" value="A/B/C/D=1-258"/>
</dbReference>
<dbReference type="PDB" id="4GLO">
    <property type="method" value="X-ray"/>
    <property type="resolution" value="1.80 A"/>
    <property type="chains" value="A/B/C/D=1-258"/>
</dbReference>
<dbReference type="PDB" id="4GVX">
    <property type="method" value="X-ray"/>
    <property type="resolution" value="1.50 A"/>
    <property type="chains" value="A/B/C/D=1-258"/>
</dbReference>
<dbReference type="PDBsum" id="4GKB"/>
<dbReference type="PDBsum" id="4GLO"/>
<dbReference type="PDBsum" id="4GVX"/>
<dbReference type="SMR" id="A0A0H3KNE7"/>
<dbReference type="STRING" id="395019.BMULJ_04919"/>
<dbReference type="KEGG" id="bmj:BMULJ_04919"/>
<dbReference type="KEGG" id="bmu:Bmul_3598"/>
<dbReference type="eggNOG" id="COG1028">
    <property type="taxonomic scope" value="Bacteria"/>
</dbReference>
<dbReference type="HOGENOM" id="CLU_010194_1_0_4"/>
<dbReference type="BioCyc" id="MetaCyc:MONOMER-21808"/>
<dbReference type="UniPathway" id="UPA00563"/>
<dbReference type="EvolutionaryTrace" id="A0A0H3KNE7"/>
<dbReference type="Proteomes" id="UP000008815">
    <property type="component" value="Chromosome 2"/>
</dbReference>
<dbReference type="GO" id="GO:0004316">
    <property type="term" value="F:3-oxoacyl-[acyl-carrier-protein] reductase (NADPH) activity"/>
    <property type="evidence" value="ECO:0007669"/>
    <property type="project" value="UniProtKB-EC"/>
</dbReference>
<dbReference type="GO" id="GO:0000166">
    <property type="term" value="F:nucleotide binding"/>
    <property type="evidence" value="ECO:0007669"/>
    <property type="project" value="UniProtKB-KW"/>
</dbReference>
<dbReference type="GO" id="GO:0019317">
    <property type="term" value="P:fucose catabolic process"/>
    <property type="evidence" value="ECO:0007669"/>
    <property type="project" value="UniProtKB-UniPathway"/>
</dbReference>
<dbReference type="CDD" id="cd05233">
    <property type="entry name" value="SDR_c"/>
    <property type="match status" value="1"/>
</dbReference>
<dbReference type="FunFam" id="3.40.50.720:FF:000084">
    <property type="entry name" value="Short-chain dehydrogenase reductase"/>
    <property type="match status" value="1"/>
</dbReference>
<dbReference type="Gene3D" id="3.40.50.720">
    <property type="entry name" value="NAD(P)-binding Rossmann-like Domain"/>
    <property type="match status" value="1"/>
</dbReference>
<dbReference type="InterPro" id="IPR036291">
    <property type="entry name" value="NAD(P)-bd_dom_sf"/>
</dbReference>
<dbReference type="InterPro" id="IPR002347">
    <property type="entry name" value="SDR_fam"/>
</dbReference>
<dbReference type="NCBIfam" id="NF006384">
    <property type="entry name" value="PRK08628.1"/>
    <property type="match status" value="1"/>
</dbReference>
<dbReference type="PANTHER" id="PTHR43639">
    <property type="entry name" value="OXIDOREDUCTASE, SHORT-CHAIN DEHYDROGENASE/REDUCTASE FAMILY (AFU_ORTHOLOGUE AFUA_5G02870)"/>
    <property type="match status" value="1"/>
</dbReference>
<dbReference type="PANTHER" id="PTHR43639:SF1">
    <property type="entry name" value="SHORT-CHAIN DEHYDROGENASE_REDUCTASE FAMILY PROTEIN"/>
    <property type="match status" value="1"/>
</dbReference>
<dbReference type="Pfam" id="PF13561">
    <property type="entry name" value="adh_short_C2"/>
    <property type="match status" value="1"/>
</dbReference>
<dbReference type="PRINTS" id="PR00081">
    <property type="entry name" value="GDHRDH"/>
</dbReference>
<dbReference type="PRINTS" id="PR00080">
    <property type="entry name" value="SDRFAMILY"/>
</dbReference>
<dbReference type="SUPFAM" id="SSF51735">
    <property type="entry name" value="NAD(P)-binding Rossmann-fold domains"/>
    <property type="match status" value="1"/>
</dbReference>
<comment type="function">
    <text evidence="2 3">L-fucose dehydrogenase involved in an L-fucose degradation pathway (Ref.1). Catalyzes the oxidation of L-fucose to L-fucono-1,5-lactone (Ref.1). Can also act on D-arabinose, with lower catalytic efficiency, and has weak activity with L-galactose and 4-deoxy-L-fucose (PubMed:23214453). Shows a preference for NADP(+) over NAD(+) (Ref.1).</text>
</comment>
<comment type="catalytic activity">
    <reaction evidence="2">
        <text>beta-L-fucose + NADP(+) = L-fucono-1,5-lactone + NADPH + H(+)</text>
        <dbReference type="Rhea" id="RHEA:75215"/>
        <dbReference type="ChEBI" id="CHEBI:15378"/>
        <dbReference type="ChEBI" id="CHEBI:42589"/>
        <dbReference type="ChEBI" id="CHEBI:57783"/>
        <dbReference type="ChEBI" id="CHEBI:58349"/>
        <dbReference type="ChEBI" id="CHEBI:81457"/>
        <dbReference type="EC" id="1.1.1.435"/>
    </reaction>
    <physiologicalReaction direction="left-to-right" evidence="2">
        <dbReference type="Rhea" id="RHEA:75216"/>
    </physiologicalReaction>
</comment>
<comment type="catalytic activity">
    <reaction evidence="2">
        <text>D-arabinose + NADP(+) = D-arabinono-1,5-lactone + NADPH + H(+)</text>
        <dbReference type="Rhea" id="RHEA:75267"/>
        <dbReference type="ChEBI" id="CHEBI:15378"/>
        <dbReference type="ChEBI" id="CHEBI:46994"/>
        <dbReference type="ChEBI" id="CHEBI:57783"/>
        <dbReference type="ChEBI" id="CHEBI:58349"/>
        <dbReference type="ChEBI" id="CHEBI:194242"/>
        <dbReference type="EC" id="1.1.1.435"/>
    </reaction>
</comment>
<comment type="biophysicochemical properties">
    <kinetics>
        <KM evidence="2">6.2 uM for L-fucose</KM>
        <KM evidence="2">94 uM for D-arabinose</KM>
        <KM evidence="2">285 uM for L-galactose</KM>
        <KM evidence="2">786 uM for 4-deoxy-L-fucose</KM>
        <KM evidence="2">4 uM for NADP(+)</KM>
        <KM evidence="2">28 uM for NAD(+)</KM>
        <text evidence="2">kcat is 10 sec(-1) with L-fucose as substrate. kcat is 21.0 sec(-1) with D-arabinose as substrate. kcat is 11 sec(-1) with L-galactose as substrate. kcat is 26 sec(-1) with 4-deoxy-L-fucose as substrate. kcat is 11 sec(-1) with NADP(+) as substrate. kcat is 15 sec(-1) with NAD(+) as substrate.</text>
    </kinetics>
</comment>
<comment type="pathway">
    <text evidence="2">Carbohydrate degradation; L-fucose degradation.</text>
</comment>
<comment type="subunit">
    <text evidence="2">Homotetramer; dimer of dimers.</text>
</comment>
<comment type="miscellaneous">
    <text evidence="2">L-fucono-1,5-lactone is unstable and is rapidly converted nonenzymatically to L-fucono-1,4-lactone.</text>
</comment>
<comment type="similarity">
    <text evidence="5">Belongs to the short-chain dehydrogenases/reductases (SDR) family.</text>
</comment>
<feature type="chain" id="PRO_0000458156" description="L-fucose dehydrogenase">
    <location>
        <begin position="1"/>
        <end position="258"/>
    </location>
</feature>
<feature type="active site" description="Proton acceptor" evidence="1">
    <location>
        <position position="153"/>
    </location>
</feature>
<feature type="binding site" evidence="2 9">
    <location>
        <position position="17"/>
    </location>
    <ligand>
        <name>NADP(+)</name>
        <dbReference type="ChEBI" id="CHEBI:58349"/>
    </ligand>
</feature>
<feature type="binding site" evidence="2 9">
    <location>
        <position position="19"/>
    </location>
    <ligand>
        <name>NADP(+)</name>
        <dbReference type="ChEBI" id="CHEBI:58349"/>
    </ligand>
</feature>
<feature type="binding site" evidence="2 9">
    <location>
        <position position="39"/>
    </location>
    <ligand>
        <name>NADP(+)</name>
        <dbReference type="ChEBI" id="CHEBI:58349"/>
    </ligand>
</feature>
<feature type="binding site" evidence="2 9">
    <location>
        <position position="40"/>
    </location>
    <ligand>
        <name>NADP(+)</name>
        <dbReference type="ChEBI" id="CHEBI:58349"/>
    </ligand>
</feature>
<feature type="binding site" evidence="2 9">
    <location>
        <position position="63"/>
    </location>
    <ligand>
        <name>NADP(+)</name>
        <dbReference type="ChEBI" id="CHEBI:58349"/>
    </ligand>
</feature>
<feature type="binding site" evidence="2 9">
    <location>
        <position position="64"/>
    </location>
    <ligand>
        <name>NADP(+)</name>
        <dbReference type="ChEBI" id="CHEBI:58349"/>
    </ligand>
</feature>
<feature type="binding site" evidence="2 9">
    <location>
        <position position="90"/>
    </location>
    <ligand>
        <name>NADP(+)</name>
        <dbReference type="ChEBI" id="CHEBI:58349"/>
    </ligand>
</feature>
<feature type="binding site" evidence="2 9">
    <location>
        <position position="94"/>
    </location>
    <ligand>
        <name>beta-L-fucose</name>
        <dbReference type="ChEBI" id="CHEBI:42589"/>
    </ligand>
</feature>
<feature type="binding site" evidence="2 9">
    <location>
        <position position="140"/>
    </location>
    <ligand>
        <name>beta-L-fucose</name>
        <dbReference type="ChEBI" id="CHEBI:42589"/>
    </ligand>
</feature>
<feature type="binding site" evidence="2 9">
    <location>
        <position position="141"/>
    </location>
    <ligand>
        <name>beta-L-fucose</name>
        <dbReference type="ChEBI" id="CHEBI:42589"/>
    </ligand>
</feature>
<feature type="binding site" evidence="2 9">
    <location>
        <position position="147"/>
    </location>
    <ligand>
        <name>beta-L-fucose</name>
        <dbReference type="ChEBI" id="CHEBI:42589"/>
    </ligand>
</feature>
<feature type="binding site" evidence="2 9">
    <location>
        <position position="153"/>
    </location>
    <ligand>
        <name>beta-L-fucose</name>
        <dbReference type="ChEBI" id="CHEBI:42589"/>
    </ligand>
</feature>
<feature type="binding site" evidence="2 9">
    <location>
        <position position="153"/>
    </location>
    <ligand>
        <name>NADP(+)</name>
        <dbReference type="ChEBI" id="CHEBI:58349"/>
    </ligand>
</feature>
<feature type="binding site" evidence="2 9">
    <location>
        <position position="157"/>
    </location>
    <ligand>
        <name>NADP(+)</name>
        <dbReference type="ChEBI" id="CHEBI:58349"/>
    </ligand>
</feature>
<feature type="binding site" evidence="2 9">
    <location>
        <position position="184"/>
    </location>
    <ligand>
        <name>beta-L-fucose</name>
        <dbReference type="ChEBI" id="CHEBI:42589"/>
    </ligand>
</feature>
<feature type="binding site" evidence="2 9">
    <location>
        <position position="185"/>
    </location>
    <ligand>
        <name>beta-L-fucose</name>
        <dbReference type="ChEBI" id="CHEBI:42589"/>
    </ligand>
</feature>
<feature type="binding site" evidence="2 9">
    <location>
        <position position="186"/>
    </location>
    <ligand>
        <name>NADP(+)</name>
        <dbReference type="ChEBI" id="CHEBI:58349"/>
    </ligand>
</feature>
<feature type="binding site" evidence="2 9">
    <location>
        <position position="188"/>
    </location>
    <ligand>
        <name>NADP(+)</name>
        <dbReference type="ChEBI" id="CHEBI:58349"/>
    </ligand>
</feature>
<feature type="strand" evidence="10">
    <location>
        <begin position="9"/>
        <end position="13"/>
    </location>
</feature>
<feature type="turn" evidence="10">
    <location>
        <begin position="14"/>
        <end position="16"/>
    </location>
</feature>
<feature type="helix" evidence="10">
    <location>
        <begin position="18"/>
        <end position="29"/>
    </location>
</feature>
<feature type="strand" evidence="10">
    <location>
        <begin position="33"/>
        <end position="40"/>
    </location>
</feature>
<feature type="helix" evidence="10">
    <location>
        <begin position="44"/>
        <end position="53"/>
    </location>
</feature>
<feature type="strand" evidence="10">
    <location>
        <begin position="58"/>
        <end position="61"/>
    </location>
</feature>
<feature type="helix" evidence="10">
    <location>
        <begin position="67"/>
        <end position="81"/>
    </location>
</feature>
<feature type="strand" evidence="10">
    <location>
        <begin position="86"/>
        <end position="89"/>
    </location>
</feature>
<feature type="helix" evidence="10">
    <location>
        <begin position="103"/>
        <end position="131"/>
    </location>
</feature>
<feature type="strand" evidence="10">
    <location>
        <begin position="134"/>
        <end position="138"/>
    </location>
</feature>
<feature type="helix" evidence="10">
    <location>
        <begin position="142"/>
        <end position="145"/>
    </location>
</feature>
<feature type="helix" evidence="10">
    <location>
        <begin position="151"/>
        <end position="171"/>
    </location>
</feature>
<feature type="helix" evidence="10">
    <location>
        <begin position="172"/>
        <end position="174"/>
    </location>
</feature>
<feature type="strand" evidence="10">
    <location>
        <begin position="177"/>
        <end position="184"/>
    </location>
</feature>
<feature type="helix" evidence="10">
    <location>
        <begin position="189"/>
        <end position="195"/>
    </location>
</feature>
<feature type="strand" evidence="10">
    <location>
        <begin position="198"/>
        <end position="200"/>
    </location>
</feature>
<feature type="helix" evidence="10">
    <location>
        <begin position="201"/>
        <end position="209"/>
    </location>
</feature>
<feature type="turn" evidence="10">
    <location>
        <begin position="213"/>
        <end position="216"/>
    </location>
</feature>
<feature type="helix" evidence="10">
    <location>
        <begin position="221"/>
        <end position="232"/>
    </location>
</feature>
<feature type="helix" evidence="10">
    <location>
        <begin position="234"/>
        <end position="236"/>
    </location>
</feature>
<feature type="strand" evidence="10">
    <location>
        <begin position="243"/>
        <end position="247"/>
    </location>
</feature>
<feature type="turn" evidence="10">
    <location>
        <begin position="248"/>
        <end position="252"/>
    </location>
</feature>
<protein>
    <recommendedName>
        <fullName evidence="4">L-fucose dehydrogenase</fullName>
        <ecNumber evidence="2">1.1.1.435</ecNumber>
    </recommendedName>
</protein>
<name>LFUCD_BURM1</name>
<gene>
    <name evidence="6" type="ordered locus">BMULJ_04919</name>
</gene>
<evidence type="ECO:0000250" key="1">
    <source>
        <dbReference type="UniProtKB" id="A7IQH5"/>
    </source>
</evidence>
<evidence type="ECO:0000269" key="2">
    <source>
    </source>
</evidence>
<evidence type="ECO:0000269" key="3">
    <source ref="1"/>
</evidence>
<evidence type="ECO:0000303" key="4">
    <source>
    </source>
</evidence>
<evidence type="ECO:0000305" key="5"/>
<evidence type="ECO:0000312" key="6">
    <source>
        <dbReference type="EMBL" id="BAG46765.1"/>
    </source>
</evidence>
<evidence type="ECO:0007744" key="7">
    <source>
        <dbReference type="PDB" id="4GKB"/>
    </source>
</evidence>
<evidence type="ECO:0007744" key="8">
    <source>
        <dbReference type="PDB" id="4GLO"/>
    </source>
</evidence>
<evidence type="ECO:0007744" key="9">
    <source>
        <dbReference type="PDB" id="4GVX"/>
    </source>
</evidence>
<evidence type="ECO:0007829" key="10">
    <source>
        <dbReference type="PDB" id="4GVX"/>
    </source>
</evidence>
<accession>A0A0H3KNE7</accession>
<reference key="1">
    <citation type="submission" date="2007-04" db="EMBL/GenBank/DDBJ databases">
        <title>Complete genome sequence of Burkholderia multivorans ATCC 17616.</title>
        <authorList>
            <person name="Ohtsubo Y."/>
            <person name="Yamashita A."/>
            <person name="Kurokawa K."/>
            <person name="Takami H."/>
            <person name="Yuhara S."/>
            <person name="Nishiyama E."/>
            <person name="Endo R."/>
            <person name="Miyazaki R."/>
            <person name="Ono A."/>
            <person name="Yano K."/>
            <person name="Ito M."/>
            <person name="Sota M."/>
            <person name="Yuji N."/>
            <person name="Hattori M."/>
            <person name="Tsuda M."/>
        </authorList>
    </citation>
    <scope>NUCLEOTIDE SEQUENCE [LARGE SCALE GENOMIC DNA]</scope>
    <source>
        <strain>ATCC 17616 / 249</strain>
    </source>
</reference>
<reference evidence="7 8 9" key="2">
    <citation type="journal article" date="2013" name="Biochemistry">
        <title>Discovery of an L-fucono-1,5-lactonase from cog3618 of the amidohydrolase superfamily.</title>
        <authorList>
            <person name="Hobbs M.E."/>
            <person name="Vetting M."/>
            <person name="Williams H.J."/>
            <person name="Narindoshvili T."/>
            <person name="Kebodeaux D.M."/>
            <person name="Hillerich B."/>
            <person name="Seidel R.D."/>
            <person name="Almo S.C."/>
            <person name="Raushel F.M."/>
        </authorList>
    </citation>
    <scope>X-RAY CRYSTALLOGRAPHY (1.50 ANGSTROMS) IN COMPLEXES WITH BETA-L-FUCOSE; NADP(+) AND NAD(+)</scope>
    <scope>FUNCTION</scope>
    <scope>CATALYTIC ACTIVITY</scope>
    <scope>BIOPHYSICOCHEMICAL PROPERTIES</scope>
    <scope>PATHWAY</scope>
    <scope>SUBUNIT</scope>
    <source>
        <strain>ATCC 17616 / 249</strain>
    </source>
</reference>
<proteinExistence type="evidence at protein level"/>
<keyword id="KW-0002">3D-structure</keyword>
<keyword id="KW-0119">Carbohydrate metabolism</keyword>
<keyword id="KW-0294">Fucose metabolism</keyword>
<keyword id="KW-0521">NADP</keyword>
<keyword id="KW-0547">Nucleotide-binding</keyword>
<keyword id="KW-0560">Oxidoreductase</keyword>
<keyword id="KW-1185">Reference proteome</keyword>
<sequence>MDLNLQDKVVIVTGGASGIGGAISMRLAEERAIPVVFARHAPDGAFLDALAQRQPRATYLPVELQDDAQCRDAVAQTIATFGRLDGLVNNAGVNDGIGLDAGRDAFVASLERNLIHYYAMAHYCVPHLKATRGAIVNISSKTAVTGQGNTSGYCASKGAQLALTREWAVALREHGVRVNAVIPAEVMTPLYRNWIATFEDPEAKLAEIAAKVPLGRRFTTPDEIADTAVFLLSPRASHTTGEWLFVDGGYTHLDRALV</sequence>